<evidence type="ECO:0000255" key="1">
    <source>
        <dbReference type="HAMAP-Rule" id="MF_00015"/>
    </source>
</evidence>
<sequence length="202" mass="22305">MKALTARQQEVFDLIRDHISQTGMPPTRAEIAQRLGFRSPNAAEEHLKALARKGVLEIVSGASRGIRLLQEEEDGLPLVGRVAAGEPLLAQQHIEGHYQVDPSLFKPSADFLLRVSGMSMKDIGIMDGDLLAVHKTQDVRNGQVVVARIDDEVTVKRLKKQGNKVELLPENSEFTPIVVDLREQSFTIEGLAVGVIRNGEWL</sequence>
<protein>
    <recommendedName>
        <fullName evidence="1">LexA repressor</fullName>
        <ecNumber evidence="1">3.4.21.88</ecNumber>
    </recommendedName>
</protein>
<keyword id="KW-0068">Autocatalytic cleavage</keyword>
<keyword id="KW-0227">DNA damage</keyword>
<keyword id="KW-0234">DNA repair</keyword>
<keyword id="KW-0235">DNA replication</keyword>
<keyword id="KW-0238">DNA-binding</keyword>
<keyword id="KW-0378">Hydrolase</keyword>
<keyword id="KW-0678">Repressor</keyword>
<keyword id="KW-0742">SOS response</keyword>
<keyword id="KW-0804">Transcription</keyword>
<keyword id="KW-0805">Transcription regulation</keyword>
<comment type="function">
    <text evidence="1">Represses a number of genes involved in the response to DNA damage (SOS response), including recA and lexA. Binds to the 16 bp palindromic sequence 5'-CTGTATATATATACAG-3'. In the presence of single-stranded DNA, RecA interacts with LexA causing an autocatalytic cleavage which disrupts the DNA-binding part of LexA, leading to derepression of the SOS regulon and eventually DNA repair.</text>
</comment>
<comment type="catalytic activity">
    <reaction evidence="1">
        <text>Hydrolysis of Ala-|-Gly bond in repressor LexA.</text>
        <dbReference type="EC" id="3.4.21.88"/>
    </reaction>
</comment>
<comment type="subunit">
    <text evidence="1">Homodimer.</text>
</comment>
<comment type="similarity">
    <text evidence="1">Belongs to the peptidase S24 family.</text>
</comment>
<proteinExistence type="inferred from homology"/>
<accession>C0Q514</accession>
<name>LEXA_SALPC</name>
<organism>
    <name type="scientific">Salmonella paratyphi C (strain RKS4594)</name>
    <dbReference type="NCBI Taxonomy" id="476213"/>
    <lineage>
        <taxon>Bacteria</taxon>
        <taxon>Pseudomonadati</taxon>
        <taxon>Pseudomonadota</taxon>
        <taxon>Gammaproteobacteria</taxon>
        <taxon>Enterobacterales</taxon>
        <taxon>Enterobacteriaceae</taxon>
        <taxon>Salmonella</taxon>
    </lineage>
</organism>
<feature type="chain" id="PRO_1000192775" description="LexA repressor">
    <location>
        <begin position="1"/>
        <end position="202"/>
    </location>
</feature>
<feature type="DNA-binding region" description="H-T-H motif" evidence="1">
    <location>
        <begin position="28"/>
        <end position="48"/>
    </location>
</feature>
<feature type="active site" description="For autocatalytic cleavage activity" evidence="1">
    <location>
        <position position="119"/>
    </location>
</feature>
<feature type="active site" description="For autocatalytic cleavage activity" evidence="1">
    <location>
        <position position="156"/>
    </location>
</feature>
<feature type="site" description="Cleavage; by autolysis" evidence="1">
    <location>
        <begin position="84"/>
        <end position="85"/>
    </location>
</feature>
<gene>
    <name evidence="1" type="primary">lexA</name>
    <name type="ordered locus">SPC_4298</name>
</gene>
<dbReference type="EC" id="3.4.21.88" evidence="1"/>
<dbReference type="EMBL" id="CP000857">
    <property type="protein sequence ID" value="ACN48361.1"/>
    <property type="molecule type" value="Genomic_DNA"/>
</dbReference>
<dbReference type="RefSeq" id="WP_000646079.1">
    <property type="nucleotide sequence ID" value="NC_012125.1"/>
</dbReference>
<dbReference type="SMR" id="C0Q514"/>
<dbReference type="MEROPS" id="S24.001"/>
<dbReference type="KEGG" id="sei:SPC_4298"/>
<dbReference type="HOGENOM" id="CLU_066192_45_3_6"/>
<dbReference type="Proteomes" id="UP000001599">
    <property type="component" value="Chromosome"/>
</dbReference>
<dbReference type="GO" id="GO:0003677">
    <property type="term" value="F:DNA binding"/>
    <property type="evidence" value="ECO:0007669"/>
    <property type="project" value="UniProtKB-UniRule"/>
</dbReference>
<dbReference type="GO" id="GO:0004252">
    <property type="term" value="F:serine-type endopeptidase activity"/>
    <property type="evidence" value="ECO:0007669"/>
    <property type="project" value="UniProtKB-UniRule"/>
</dbReference>
<dbReference type="GO" id="GO:0006281">
    <property type="term" value="P:DNA repair"/>
    <property type="evidence" value="ECO:0007669"/>
    <property type="project" value="UniProtKB-UniRule"/>
</dbReference>
<dbReference type="GO" id="GO:0006260">
    <property type="term" value="P:DNA replication"/>
    <property type="evidence" value="ECO:0007669"/>
    <property type="project" value="UniProtKB-UniRule"/>
</dbReference>
<dbReference type="GO" id="GO:0045892">
    <property type="term" value="P:negative regulation of DNA-templated transcription"/>
    <property type="evidence" value="ECO:0007669"/>
    <property type="project" value="UniProtKB-UniRule"/>
</dbReference>
<dbReference type="GO" id="GO:0006508">
    <property type="term" value="P:proteolysis"/>
    <property type="evidence" value="ECO:0007669"/>
    <property type="project" value="InterPro"/>
</dbReference>
<dbReference type="GO" id="GO:0009432">
    <property type="term" value="P:SOS response"/>
    <property type="evidence" value="ECO:0007669"/>
    <property type="project" value="UniProtKB-UniRule"/>
</dbReference>
<dbReference type="CDD" id="cd06529">
    <property type="entry name" value="S24_LexA-like"/>
    <property type="match status" value="1"/>
</dbReference>
<dbReference type="FunFam" id="1.10.10.10:FF:000009">
    <property type="entry name" value="LexA repressor"/>
    <property type="match status" value="1"/>
</dbReference>
<dbReference type="FunFam" id="2.10.109.10:FF:000001">
    <property type="entry name" value="LexA repressor"/>
    <property type="match status" value="1"/>
</dbReference>
<dbReference type="Gene3D" id="2.10.109.10">
    <property type="entry name" value="Umud Fragment, subunit A"/>
    <property type="match status" value="1"/>
</dbReference>
<dbReference type="Gene3D" id="1.10.10.10">
    <property type="entry name" value="Winged helix-like DNA-binding domain superfamily/Winged helix DNA-binding domain"/>
    <property type="match status" value="1"/>
</dbReference>
<dbReference type="HAMAP" id="MF_00015">
    <property type="entry name" value="LexA"/>
    <property type="match status" value="1"/>
</dbReference>
<dbReference type="InterPro" id="IPR006200">
    <property type="entry name" value="LexA"/>
</dbReference>
<dbReference type="InterPro" id="IPR039418">
    <property type="entry name" value="LexA-like"/>
</dbReference>
<dbReference type="InterPro" id="IPR036286">
    <property type="entry name" value="LexA/Signal_pep-like_sf"/>
</dbReference>
<dbReference type="InterPro" id="IPR006199">
    <property type="entry name" value="LexA_DNA-bd_dom"/>
</dbReference>
<dbReference type="InterPro" id="IPR050077">
    <property type="entry name" value="LexA_repressor"/>
</dbReference>
<dbReference type="InterPro" id="IPR006197">
    <property type="entry name" value="Peptidase_S24_LexA"/>
</dbReference>
<dbReference type="InterPro" id="IPR015927">
    <property type="entry name" value="Peptidase_S24_S26A/B/C"/>
</dbReference>
<dbReference type="InterPro" id="IPR036388">
    <property type="entry name" value="WH-like_DNA-bd_sf"/>
</dbReference>
<dbReference type="InterPro" id="IPR036390">
    <property type="entry name" value="WH_DNA-bd_sf"/>
</dbReference>
<dbReference type="NCBIfam" id="TIGR00498">
    <property type="entry name" value="lexA"/>
    <property type="match status" value="1"/>
</dbReference>
<dbReference type="PANTHER" id="PTHR33516">
    <property type="entry name" value="LEXA REPRESSOR"/>
    <property type="match status" value="1"/>
</dbReference>
<dbReference type="PANTHER" id="PTHR33516:SF2">
    <property type="entry name" value="LEXA REPRESSOR-RELATED"/>
    <property type="match status" value="1"/>
</dbReference>
<dbReference type="Pfam" id="PF01726">
    <property type="entry name" value="LexA_DNA_bind"/>
    <property type="match status" value="1"/>
</dbReference>
<dbReference type="Pfam" id="PF00717">
    <property type="entry name" value="Peptidase_S24"/>
    <property type="match status" value="1"/>
</dbReference>
<dbReference type="PRINTS" id="PR00726">
    <property type="entry name" value="LEXASERPTASE"/>
</dbReference>
<dbReference type="SUPFAM" id="SSF51306">
    <property type="entry name" value="LexA/Signal peptidase"/>
    <property type="match status" value="1"/>
</dbReference>
<dbReference type="SUPFAM" id="SSF46785">
    <property type="entry name" value="Winged helix' DNA-binding domain"/>
    <property type="match status" value="1"/>
</dbReference>
<reference key="1">
    <citation type="journal article" date="2009" name="PLoS ONE">
        <title>Salmonella paratyphi C: genetic divergence from Salmonella choleraesuis and pathogenic convergence with Salmonella typhi.</title>
        <authorList>
            <person name="Liu W.-Q."/>
            <person name="Feng Y."/>
            <person name="Wang Y."/>
            <person name="Zou Q.-H."/>
            <person name="Chen F."/>
            <person name="Guo J.-T."/>
            <person name="Peng Y.-H."/>
            <person name="Jin Y."/>
            <person name="Li Y.-G."/>
            <person name="Hu S.-N."/>
            <person name="Johnston R.N."/>
            <person name="Liu G.-R."/>
            <person name="Liu S.-L."/>
        </authorList>
    </citation>
    <scope>NUCLEOTIDE SEQUENCE [LARGE SCALE GENOMIC DNA]</scope>
    <source>
        <strain>RKS4594</strain>
    </source>
</reference>